<comment type="function">
    <text evidence="7 8">Component of the chloroplast ribosome (chloro-ribosome), a dedicated translation machinery responsible for the synthesis of chloroplast genome-encoded proteins, including proteins of the transcription and translation machinery and components of the photosynthetic apparatus.</text>
</comment>
<comment type="subunit">
    <text evidence="2 3">Component of the chloroplast small ribosomal subunit (SSU). Mature 70S chloroplast ribosomes of higher plants consist of a small (30S) and a large (50S) subunit. The 30S small subunit contains 1 molecule of ribosomal RNA (16S rRNA) and 24 different proteins. The 50S large subunit contains 3 rRNA molecules (23S, 5S and 4.5S rRNA) and 33 different proteins.</text>
</comment>
<comment type="subcellular location">
    <subcellularLocation>
        <location evidence="2 3">Plastid</location>
        <location evidence="2 3">Chloroplast</location>
    </subcellularLocation>
</comment>
<comment type="mass spectrometry"/>
<comment type="mass spectrometry"/>
<comment type="similarity">
    <text evidence="6">Belongs to the universal ribosomal protein uS4 family.</text>
</comment>
<geneLocation type="chloroplast"/>
<protein>
    <recommendedName>
        <fullName evidence="5">Small ribosomal subunit protein uS4c</fullName>
    </recommendedName>
    <alternativeName>
        <fullName evidence="4">30S ribosomal protein S4, chloroplastic</fullName>
    </alternativeName>
</protein>
<sequence>MSRYRGPRFKKIRRLGALPGLTNKRPRAGSDLRNQSRSGKRSQYRIRLEEKQKLRFHYGITERQLLKYVRIARKAKGSTGQVLLQLLEMRLDNILFRLGMAPTIPGARQLVNHRHILVNGRIVDIPSYRCKPQDTIMARDEQKSIALIQNSLDLSPREELPKHLTLNPFPYKGLVNQIIDSKWVGLKINELLVVEYYSRQT</sequence>
<dbReference type="EMBL" id="AJ400848">
    <property type="protein sequence ID" value="CAB88731.1"/>
    <property type="molecule type" value="Genomic_DNA"/>
</dbReference>
<dbReference type="PIR" id="A30833">
    <property type="entry name" value="A30833"/>
</dbReference>
<dbReference type="RefSeq" id="NP_054938.1">
    <property type="nucleotide sequence ID" value="NC_002202.1"/>
</dbReference>
<dbReference type="PDB" id="4V61">
    <property type="method" value="EM"/>
    <property type="resolution" value="9.40 A"/>
    <property type="chains" value="AD=1-201"/>
</dbReference>
<dbReference type="PDB" id="5MMJ">
    <property type="method" value="EM"/>
    <property type="resolution" value="3.65 A"/>
    <property type="chains" value="d=1-201"/>
</dbReference>
<dbReference type="PDB" id="5MMM">
    <property type="method" value="EM"/>
    <property type="resolution" value="3.40 A"/>
    <property type="chains" value="d=1-201"/>
</dbReference>
<dbReference type="PDB" id="5X8P">
    <property type="method" value="EM"/>
    <property type="resolution" value="3.40 A"/>
    <property type="chains" value="d=1-201"/>
</dbReference>
<dbReference type="PDB" id="5X8R">
    <property type="method" value="EM"/>
    <property type="resolution" value="3.70 A"/>
    <property type="chains" value="d=1-201"/>
</dbReference>
<dbReference type="PDB" id="6ERI">
    <property type="method" value="EM"/>
    <property type="resolution" value="3.00 A"/>
    <property type="chains" value="BD=2-201"/>
</dbReference>
<dbReference type="PDBsum" id="4V61"/>
<dbReference type="PDBsum" id="5MMJ"/>
<dbReference type="PDBsum" id="5MMM"/>
<dbReference type="PDBsum" id="5X8P"/>
<dbReference type="PDBsum" id="5X8R"/>
<dbReference type="PDBsum" id="6ERI"/>
<dbReference type="EMDB" id="EMD-3532"/>
<dbReference type="EMDB" id="EMD-3533"/>
<dbReference type="EMDB" id="EMD-3941"/>
<dbReference type="EMDB" id="EMD-6709"/>
<dbReference type="EMDB" id="EMD-6710"/>
<dbReference type="SMR" id="P13788"/>
<dbReference type="FunCoup" id="P13788">
    <property type="interactions" value="190"/>
</dbReference>
<dbReference type="STRING" id="3562.P13788"/>
<dbReference type="GeneID" id="2715646"/>
<dbReference type="KEGG" id="soe:2715646"/>
<dbReference type="InParanoid" id="P13788"/>
<dbReference type="OrthoDB" id="2443at2759"/>
<dbReference type="Proteomes" id="UP001155700">
    <property type="component" value="Chloroplast Pltd"/>
</dbReference>
<dbReference type="GO" id="GO:0009507">
    <property type="term" value="C:chloroplast"/>
    <property type="evidence" value="ECO:0007669"/>
    <property type="project" value="UniProtKB-SubCell"/>
</dbReference>
<dbReference type="GO" id="GO:0015935">
    <property type="term" value="C:small ribosomal subunit"/>
    <property type="evidence" value="ECO:0000318"/>
    <property type="project" value="GO_Central"/>
</dbReference>
<dbReference type="GO" id="GO:0019843">
    <property type="term" value="F:rRNA binding"/>
    <property type="evidence" value="ECO:0000318"/>
    <property type="project" value="GO_Central"/>
</dbReference>
<dbReference type="GO" id="GO:0003735">
    <property type="term" value="F:structural constituent of ribosome"/>
    <property type="evidence" value="ECO:0000318"/>
    <property type="project" value="GO_Central"/>
</dbReference>
<dbReference type="GO" id="GO:0042274">
    <property type="term" value="P:ribosomal small subunit biogenesis"/>
    <property type="evidence" value="ECO:0000318"/>
    <property type="project" value="GO_Central"/>
</dbReference>
<dbReference type="GO" id="GO:0006412">
    <property type="term" value="P:translation"/>
    <property type="evidence" value="ECO:0007669"/>
    <property type="project" value="UniProtKB-UniRule"/>
</dbReference>
<dbReference type="CDD" id="cd00165">
    <property type="entry name" value="S4"/>
    <property type="match status" value="1"/>
</dbReference>
<dbReference type="FunFam" id="1.10.1050.10:FF:000002">
    <property type="entry name" value="30S ribosomal protein S4, chloroplastic"/>
    <property type="match status" value="1"/>
</dbReference>
<dbReference type="FunFam" id="3.10.290.10:FF:000081">
    <property type="entry name" value="30S ribosomal protein S4, chloroplastic"/>
    <property type="match status" value="1"/>
</dbReference>
<dbReference type="Gene3D" id="1.10.1050.10">
    <property type="entry name" value="Ribosomal Protein S4 Delta 41, Chain A, domain 1"/>
    <property type="match status" value="1"/>
</dbReference>
<dbReference type="Gene3D" id="3.10.290.10">
    <property type="entry name" value="RNA-binding S4 domain"/>
    <property type="match status" value="1"/>
</dbReference>
<dbReference type="HAMAP" id="MF_01306_B">
    <property type="entry name" value="Ribosomal_uS4_B"/>
    <property type="match status" value="1"/>
</dbReference>
<dbReference type="InterPro" id="IPR022801">
    <property type="entry name" value="Ribosomal_uS4"/>
</dbReference>
<dbReference type="InterPro" id="IPR005709">
    <property type="entry name" value="Ribosomal_uS4_bac-type"/>
</dbReference>
<dbReference type="InterPro" id="IPR018079">
    <property type="entry name" value="Ribosomal_uS4_CS"/>
</dbReference>
<dbReference type="InterPro" id="IPR001912">
    <property type="entry name" value="Ribosomal_uS4_N"/>
</dbReference>
<dbReference type="InterPro" id="IPR002942">
    <property type="entry name" value="S4_RNA-bd"/>
</dbReference>
<dbReference type="InterPro" id="IPR036986">
    <property type="entry name" value="S4_RNA-bd_sf"/>
</dbReference>
<dbReference type="NCBIfam" id="NF003717">
    <property type="entry name" value="PRK05327.1"/>
    <property type="match status" value="1"/>
</dbReference>
<dbReference type="NCBIfam" id="TIGR01017">
    <property type="entry name" value="rpsD_bact"/>
    <property type="match status" value="1"/>
</dbReference>
<dbReference type="PANTHER" id="PTHR11831">
    <property type="entry name" value="30S 40S RIBOSOMAL PROTEIN"/>
    <property type="match status" value="1"/>
</dbReference>
<dbReference type="PANTHER" id="PTHR11831:SF4">
    <property type="entry name" value="SMALL RIBOSOMAL SUBUNIT PROTEIN US4M"/>
    <property type="match status" value="1"/>
</dbReference>
<dbReference type="Pfam" id="PF00163">
    <property type="entry name" value="Ribosomal_S4"/>
    <property type="match status" value="1"/>
</dbReference>
<dbReference type="Pfam" id="PF01479">
    <property type="entry name" value="S4"/>
    <property type="match status" value="1"/>
</dbReference>
<dbReference type="SMART" id="SM01390">
    <property type="entry name" value="Ribosomal_S4"/>
    <property type="match status" value="1"/>
</dbReference>
<dbReference type="SMART" id="SM00363">
    <property type="entry name" value="S4"/>
    <property type="match status" value="1"/>
</dbReference>
<dbReference type="SUPFAM" id="SSF55174">
    <property type="entry name" value="Alpha-L RNA-binding motif"/>
    <property type="match status" value="1"/>
</dbReference>
<dbReference type="PROSITE" id="PS00632">
    <property type="entry name" value="RIBOSOMAL_S4"/>
    <property type="match status" value="1"/>
</dbReference>
<dbReference type="PROSITE" id="PS50889">
    <property type="entry name" value="S4"/>
    <property type="match status" value="1"/>
</dbReference>
<gene>
    <name type="primary">rps4</name>
</gene>
<keyword id="KW-0002">3D-structure</keyword>
<keyword id="KW-0150">Chloroplast</keyword>
<keyword id="KW-0903">Direct protein sequencing</keyword>
<keyword id="KW-0934">Plastid</keyword>
<keyword id="KW-1185">Reference proteome</keyword>
<keyword id="KW-0687">Ribonucleoprotein</keyword>
<keyword id="KW-0689">Ribosomal protein</keyword>
<keyword id="KW-0694">RNA-binding</keyword>
<keyword id="KW-0699">rRNA-binding</keyword>
<organism>
    <name type="scientific">Spinacia oleracea</name>
    <name type="common">Spinach</name>
    <dbReference type="NCBI Taxonomy" id="3562"/>
    <lineage>
        <taxon>Eukaryota</taxon>
        <taxon>Viridiplantae</taxon>
        <taxon>Streptophyta</taxon>
        <taxon>Embryophyta</taxon>
        <taxon>Tracheophyta</taxon>
        <taxon>Spermatophyta</taxon>
        <taxon>Magnoliopsida</taxon>
        <taxon>eudicotyledons</taxon>
        <taxon>Gunneridae</taxon>
        <taxon>Pentapetalae</taxon>
        <taxon>Caryophyllales</taxon>
        <taxon>Chenopodiaceae</taxon>
        <taxon>Chenopodioideae</taxon>
        <taxon>Anserineae</taxon>
        <taxon>Spinacia</taxon>
    </lineage>
</organism>
<proteinExistence type="evidence at protein level"/>
<evidence type="ECO:0000256" key="1">
    <source>
        <dbReference type="SAM" id="MobiDB-lite"/>
    </source>
</evidence>
<evidence type="ECO:0000269" key="2">
    <source>
    </source>
</evidence>
<evidence type="ECO:0000269" key="3">
    <source>
    </source>
</evidence>
<evidence type="ECO:0000303" key="4">
    <source>
    </source>
</evidence>
<evidence type="ECO:0000303" key="5">
    <source>
    </source>
</evidence>
<evidence type="ECO:0000305" key="6"/>
<evidence type="ECO:0000305" key="7">
    <source>
    </source>
</evidence>
<evidence type="ECO:0000305" key="8">
    <source>
    </source>
</evidence>
<reference key="1">
    <citation type="journal article" date="1986" name="Plant Mol. Biol.">
        <title>Characterization of the spinach chloroplast genes for the S4 ribosomal protein, tRNA-Thr (UGU) and tRNA-Ser (GGA).</title>
        <authorList>
            <person name="Tahar S.B."/>
            <person name="Bottomley W."/>
            <person name="Whitfeld P.R."/>
        </authorList>
        <dbReference type="AGRICOLA" id="IND87003975"/>
    </citation>
    <scope>NUCLEOTIDE SEQUENCE [GENOMIC DNA]</scope>
</reference>
<reference key="2">
    <citation type="journal article" date="2001" name="Plant Mol. Biol.">
        <title>The plastid chromosome of spinach (Spinacia oleracea): complete nucleotide sequence and gene organization.</title>
        <authorList>
            <person name="Schmitz-Linneweber C."/>
            <person name="Maier R.M."/>
            <person name="Alcaraz J.-P."/>
            <person name="Cottet A."/>
            <person name="Herrmann R.G."/>
            <person name="Mache R."/>
        </authorList>
    </citation>
    <scope>NUCLEOTIDE SEQUENCE [LARGE SCALE GENOMIC DNA]</scope>
    <source>
        <strain>cv. Geant d'hiver</strain>
        <strain>cv. Monatol</strain>
    </source>
</reference>
<reference key="3">
    <citation type="journal article" date="2000" name="J. Biol. Chem.">
        <title>The plastid ribosomal proteins. Identification of all the proteins in the 30S subunit of an organelle ribosome (chloroplast).</title>
        <authorList>
            <person name="Yamaguchi K."/>
            <person name="von Knoblauch K."/>
            <person name="Subramanian A.R."/>
        </authorList>
    </citation>
    <scope>PROTEIN SEQUENCE OF 2-7</scope>
    <scope>SUBUNIT</scope>
    <scope>SUBCELLULAR LOCATION</scope>
    <scope>MASS SPECTROMETRY</scope>
    <source>
        <strain>cv. Alwaro</strain>
        <tissue>Leaf</tissue>
    </source>
</reference>
<reference key="4">
    <citation type="journal article" date="2007" name="Proc. Natl. Acad. Sci. U.S.A.">
        <title>Cryo-EM study of the spinach chloroplast ribosome reveals the structural and functional roles of plastid-specific ribosomal proteins.</title>
        <authorList>
            <person name="Sharma M.R."/>
            <person name="Wilson D.N."/>
            <person name="Datta P.P."/>
            <person name="Barat C."/>
            <person name="Schluenzen F."/>
            <person name="Fucini P."/>
            <person name="Agrawal R.K."/>
        </authorList>
    </citation>
    <scope>STRUCTURE BY ELECTRON MICROSCOPY (9.4 ANGSTROMS)</scope>
</reference>
<reference key="5">
    <citation type="journal article" date="2017" name="EMBO J.">
        <title>The complete structure of the chloroplast 70S ribosome in complex with translation factor pY.</title>
        <authorList>
            <person name="Bieri P."/>
            <person name="Leibundgut M."/>
            <person name="Saurer M."/>
            <person name="Boehringer D."/>
            <person name="Ban N."/>
        </authorList>
    </citation>
    <scope>STRUCTURE BY ELECTRON MICROSCOPY (3.40 ANGSTROMS)</scope>
    <scope>SUBUNIT</scope>
    <scope>SUBCELLULAR LOCATION</scope>
</reference>
<accession>P13788</accession>
<feature type="initiator methionine" description="Removed" evidence="2">
    <location>
        <position position="1"/>
    </location>
</feature>
<feature type="chain" id="PRO_0000132668" description="Small ribosomal subunit protein uS4c">
    <location>
        <begin position="2"/>
        <end position="201"/>
    </location>
</feature>
<feature type="domain" description="S4 RNA-binding">
    <location>
        <begin position="89"/>
        <end position="149"/>
    </location>
</feature>
<feature type="region of interest" description="Disordered" evidence="1">
    <location>
        <begin position="15"/>
        <end position="43"/>
    </location>
</feature>
<name>RR4_SPIOL</name>